<accession>P9WIY8</accession>
<accession>L0T771</accession>
<accession>O53411</accession>
<accession>P67098</accession>
<comment type="similarity">
    <text evidence="3">Belongs to the NTE family.</text>
</comment>
<feature type="chain" id="PRO_0000427922" description="Uncharacterized NTE family protein MT1093">
    <location>
        <begin position="1"/>
        <end position="360"/>
    </location>
</feature>
<feature type="domain" description="PNPLA" evidence="1">
    <location>
        <begin position="19"/>
        <end position="179"/>
    </location>
</feature>
<feature type="region of interest" description="Disordered" evidence="2">
    <location>
        <begin position="251"/>
        <end position="282"/>
    </location>
</feature>
<feature type="short sequence motif" description="GXSXG" evidence="1">
    <location>
        <begin position="50"/>
        <end position="54"/>
    </location>
</feature>
<feature type="short sequence motif" description="DGA/G" evidence="1">
    <location>
        <begin position="166"/>
        <end position="168"/>
    </location>
</feature>
<feature type="active site" description="Nucleophile" evidence="1">
    <location>
        <position position="52"/>
    </location>
</feature>
<feature type="active site" description="Proton acceptor" evidence="1">
    <location>
        <position position="166"/>
    </location>
</feature>
<name>Y1063_MYCTO</name>
<keyword id="KW-0378">Hydrolase</keyword>
<keyword id="KW-0442">Lipid degradation</keyword>
<keyword id="KW-0443">Lipid metabolism</keyword>
<keyword id="KW-1185">Reference proteome</keyword>
<dbReference type="EMBL" id="AE000516">
    <property type="protein sequence ID" value="AAK45347.1"/>
    <property type="molecule type" value="Genomic_DNA"/>
</dbReference>
<dbReference type="PIR" id="E70892">
    <property type="entry name" value="E70892"/>
</dbReference>
<dbReference type="RefSeq" id="WP_003405642.1">
    <property type="nucleotide sequence ID" value="NZ_KK341227.1"/>
</dbReference>
<dbReference type="SMR" id="P9WIY8"/>
<dbReference type="KEGG" id="mtc:MT1093"/>
<dbReference type="PATRIC" id="fig|83331.31.peg.1176"/>
<dbReference type="HOGENOM" id="CLU_047251_2_1_11"/>
<dbReference type="Proteomes" id="UP000001020">
    <property type="component" value="Chromosome"/>
</dbReference>
<dbReference type="GO" id="GO:0004622">
    <property type="term" value="F:lysophospholipase activity"/>
    <property type="evidence" value="ECO:0007669"/>
    <property type="project" value="InterPro"/>
</dbReference>
<dbReference type="GO" id="GO:0016042">
    <property type="term" value="P:lipid catabolic process"/>
    <property type="evidence" value="ECO:0007669"/>
    <property type="project" value="UniProtKB-KW"/>
</dbReference>
<dbReference type="GO" id="GO:0046470">
    <property type="term" value="P:phosphatidylcholine metabolic process"/>
    <property type="evidence" value="ECO:0007669"/>
    <property type="project" value="InterPro"/>
</dbReference>
<dbReference type="CDD" id="cd07228">
    <property type="entry name" value="Pat_NTE_like_bacteria"/>
    <property type="match status" value="1"/>
</dbReference>
<dbReference type="Gene3D" id="3.40.1090.10">
    <property type="entry name" value="Cytosolic phospholipase A2 catalytic domain"/>
    <property type="match status" value="2"/>
</dbReference>
<dbReference type="InterPro" id="IPR016035">
    <property type="entry name" value="Acyl_Trfase/lysoPLipase"/>
</dbReference>
<dbReference type="InterPro" id="IPR001423">
    <property type="entry name" value="LysoPLipase_patatin_CS"/>
</dbReference>
<dbReference type="InterPro" id="IPR050301">
    <property type="entry name" value="NTE"/>
</dbReference>
<dbReference type="InterPro" id="IPR002641">
    <property type="entry name" value="PNPLA_dom"/>
</dbReference>
<dbReference type="PANTHER" id="PTHR14226">
    <property type="entry name" value="NEUROPATHY TARGET ESTERASE/SWISS CHEESE D.MELANOGASTER"/>
    <property type="match status" value="1"/>
</dbReference>
<dbReference type="PANTHER" id="PTHR14226:SF76">
    <property type="entry name" value="NTE FAMILY PROTEIN RSSA"/>
    <property type="match status" value="1"/>
</dbReference>
<dbReference type="Pfam" id="PF01734">
    <property type="entry name" value="Patatin"/>
    <property type="match status" value="1"/>
</dbReference>
<dbReference type="SUPFAM" id="SSF52151">
    <property type="entry name" value="FabD/lysophospholipase-like"/>
    <property type="match status" value="1"/>
</dbReference>
<dbReference type="PROSITE" id="PS51635">
    <property type="entry name" value="PNPLA"/>
    <property type="match status" value="1"/>
</dbReference>
<dbReference type="PROSITE" id="PS01237">
    <property type="entry name" value="UPF0028"/>
    <property type="match status" value="1"/>
</dbReference>
<evidence type="ECO:0000255" key="1">
    <source>
        <dbReference type="PROSITE-ProRule" id="PRU01161"/>
    </source>
</evidence>
<evidence type="ECO:0000256" key="2">
    <source>
        <dbReference type="SAM" id="MobiDB-lite"/>
    </source>
</evidence>
<evidence type="ECO:0000305" key="3"/>
<gene>
    <name type="ordered locus">MT1093</name>
</gene>
<proteinExistence type="inferred from homology"/>
<sequence length="360" mass="37523">MPAPAALRVRGSSSPRVALALGSGGARGYAHIGVIQALRERGYDIVGIAGSSMGAVVGGVHAAGRLDEFAHWAKSLTQRTILRLLDPSISAAGILRAEKILDAVRDIVGPVAIEQLPIPYTAVATDLLAGKSVWFQRGPLDAAIRASIAIPGVIAPHEVDGRLLADGGILDPLPMAPIAGVNADLTIAVSLNGSEAGPARDAEPNVTAEWLNRMVRSTSALFDVSAARSLLDRPTARAVLSRFGAAAAESDSWSQAPEIEQRPAGPPADREEAADTPGLPKMGSFEVMNRTIDIAQSALARHTLAGYPADLLIEVPRSTCRSLEFHRAVEVIAVGRALATQALEAFEIDDDESAAATIEG</sequence>
<reference key="1">
    <citation type="journal article" date="2002" name="J. Bacteriol.">
        <title>Whole-genome comparison of Mycobacterium tuberculosis clinical and laboratory strains.</title>
        <authorList>
            <person name="Fleischmann R.D."/>
            <person name="Alland D."/>
            <person name="Eisen J.A."/>
            <person name="Carpenter L."/>
            <person name="White O."/>
            <person name="Peterson J.D."/>
            <person name="DeBoy R.T."/>
            <person name="Dodson R.J."/>
            <person name="Gwinn M.L."/>
            <person name="Haft D.H."/>
            <person name="Hickey E.K."/>
            <person name="Kolonay J.F."/>
            <person name="Nelson W.C."/>
            <person name="Umayam L.A."/>
            <person name="Ermolaeva M.D."/>
            <person name="Salzberg S.L."/>
            <person name="Delcher A."/>
            <person name="Utterback T.R."/>
            <person name="Weidman J.F."/>
            <person name="Khouri H.M."/>
            <person name="Gill J."/>
            <person name="Mikula A."/>
            <person name="Bishai W."/>
            <person name="Jacobs W.R. Jr."/>
            <person name="Venter J.C."/>
            <person name="Fraser C.M."/>
        </authorList>
    </citation>
    <scope>NUCLEOTIDE SEQUENCE [LARGE SCALE GENOMIC DNA]</scope>
    <source>
        <strain>CDC 1551 / Oshkosh</strain>
    </source>
</reference>
<protein>
    <recommendedName>
        <fullName>Uncharacterized NTE family protein MT1093</fullName>
    </recommendedName>
</protein>
<organism>
    <name type="scientific">Mycobacterium tuberculosis (strain CDC 1551 / Oshkosh)</name>
    <dbReference type="NCBI Taxonomy" id="83331"/>
    <lineage>
        <taxon>Bacteria</taxon>
        <taxon>Bacillati</taxon>
        <taxon>Actinomycetota</taxon>
        <taxon>Actinomycetes</taxon>
        <taxon>Mycobacteriales</taxon>
        <taxon>Mycobacteriaceae</taxon>
        <taxon>Mycobacterium</taxon>
        <taxon>Mycobacterium tuberculosis complex</taxon>
    </lineage>
</organism>